<gene>
    <name evidence="1" type="primary">pyrG</name>
    <name type="ordered locus">PA14_17290</name>
</gene>
<dbReference type="EC" id="6.3.4.2" evidence="1"/>
<dbReference type="EMBL" id="CP000438">
    <property type="protein sequence ID" value="ABJ12870.1"/>
    <property type="molecule type" value="Genomic_DNA"/>
</dbReference>
<dbReference type="RefSeq" id="WP_003092366.1">
    <property type="nucleotide sequence ID" value="NZ_CP034244.1"/>
</dbReference>
<dbReference type="SMR" id="Q02RA9"/>
<dbReference type="MEROPS" id="C26.964"/>
<dbReference type="KEGG" id="pau:PA14_17290"/>
<dbReference type="PseudoCAP" id="PA14_17290"/>
<dbReference type="HOGENOM" id="CLU_011675_5_0_6"/>
<dbReference type="BioCyc" id="PAER208963:G1G74-1424-MONOMER"/>
<dbReference type="UniPathway" id="UPA00159">
    <property type="reaction ID" value="UER00277"/>
</dbReference>
<dbReference type="Proteomes" id="UP000000653">
    <property type="component" value="Chromosome"/>
</dbReference>
<dbReference type="GO" id="GO:0005829">
    <property type="term" value="C:cytosol"/>
    <property type="evidence" value="ECO:0007669"/>
    <property type="project" value="TreeGrafter"/>
</dbReference>
<dbReference type="GO" id="GO:0005524">
    <property type="term" value="F:ATP binding"/>
    <property type="evidence" value="ECO:0007669"/>
    <property type="project" value="UniProtKB-KW"/>
</dbReference>
<dbReference type="GO" id="GO:0003883">
    <property type="term" value="F:CTP synthase activity"/>
    <property type="evidence" value="ECO:0007669"/>
    <property type="project" value="UniProtKB-UniRule"/>
</dbReference>
<dbReference type="GO" id="GO:0004359">
    <property type="term" value="F:glutaminase activity"/>
    <property type="evidence" value="ECO:0007669"/>
    <property type="project" value="RHEA"/>
</dbReference>
<dbReference type="GO" id="GO:0042802">
    <property type="term" value="F:identical protein binding"/>
    <property type="evidence" value="ECO:0007669"/>
    <property type="project" value="TreeGrafter"/>
</dbReference>
<dbReference type="GO" id="GO:0046872">
    <property type="term" value="F:metal ion binding"/>
    <property type="evidence" value="ECO:0007669"/>
    <property type="project" value="UniProtKB-KW"/>
</dbReference>
<dbReference type="GO" id="GO:0044210">
    <property type="term" value="P:'de novo' CTP biosynthetic process"/>
    <property type="evidence" value="ECO:0007669"/>
    <property type="project" value="UniProtKB-UniRule"/>
</dbReference>
<dbReference type="GO" id="GO:0019856">
    <property type="term" value="P:pyrimidine nucleobase biosynthetic process"/>
    <property type="evidence" value="ECO:0007669"/>
    <property type="project" value="TreeGrafter"/>
</dbReference>
<dbReference type="CDD" id="cd03113">
    <property type="entry name" value="CTPS_N"/>
    <property type="match status" value="1"/>
</dbReference>
<dbReference type="CDD" id="cd01746">
    <property type="entry name" value="GATase1_CTP_Synthase"/>
    <property type="match status" value="1"/>
</dbReference>
<dbReference type="FunFam" id="3.40.50.300:FF:000009">
    <property type="entry name" value="CTP synthase"/>
    <property type="match status" value="1"/>
</dbReference>
<dbReference type="FunFam" id="3.40.50.880:FF:000002">
    <property type="entry name" value="CTP synthase"/>
    <property type="match status" value="1"/>
</dbReference>
<dbReference type="Gene3D" id="3.40.50.880">
    <property type="match status" value="1"/>
</dbReference>
<dbReference type="Gene3D" id="3.40.50.300">
    <property type="entry name" value="P-loop containing nucleotide triphosphate hydrolases"/>
    <property type="match status" value="1"/>
</dbReference>
<dbReference type="HAMAP" id="MF_01227">
    <property type="entry name" value="PyrG"/>
    <property type="match status" value="1"/>
</dbReference>
<dbReference type="InterPro" id="IPR029062">
    <property type="entry name" value="Class_I_gatase-like"/>
</dbReference>
<dbReference type="InterPro" id="IPR004468">
    <property type="entry name" value="CTP_synthase"/>
</dbReference>
<dbReference type="InterPro" id="IPR017456">
    <property type="entry name" value="CTP_synthase_N"/>
</dbReference>
<dbReference type="InterPro" id="IPR017926">
    <property type="entry name" value="GATASE"/>
</dbReference>
<dbReference type="InterPro" id="IPR033828">
    <property type="entry name" value="GATase1_CTP_Synthase"/>
</dbReference>
<dbReference type="InterPro" id="IPR027417">
    <property type="entry name" value="P-loop_NTPase"/>
</dbReference>
<dbReference type="NCBIfam" id="NF003792">
    <property type="entry name" value="PRK05380.1"/>
    <property type="match status" value="1"/>
</dbReference>
<dbReference type="NCBIfam" id="TIGR00337">
    <property type="entry name" value="PyrG"/>
    <property type="match status" value="1"/>
</dbReference>
<dbReference type="PANTHER" id="PTHR11550">
    <property type="entry name" value="CTP SYNTHASE"/>
    <property type="match status" value="1"/>
</dbReference>
<dbReference type="PANTHER" id="PTHR11550:SF0">
    <property type="entry name" value="CTP SYNTHASE-RELATED"/>
    <property type="match status" value="1"/>
</dbReference>
<dbReference type="Pfam" id="PF06418">
    <property type="entry name" value="CTP_synth_N"/>
    <property type="match status" value="1"/>
</dbReference>
<dbReference type="Pfam" id="PF00117">
    <property type="entry name" value="GATase"/>
    <property type="match status" value="1"/>
</dbReference>
<dbReference type="SUPFAM" id="SSF52317">
    <property type="entry name" value="Class I glutamine amidotransferase-like"/>
    <property type="match status" value="1"/>
</dbReference>
<dbReference type="SUPFAM" id="SSF52540">
    <property type="entry name" value="P-loop containing nucleoside triphosphate hydrolases"/>
    <property type="match status" value="1"/>
</dbReference>
<dbReference type="PROSITE" id="PS51273">
    <property type="entry name" value="GATASE_TYPE_1"/>
    <property type="match status" value="1"/>
</dbReference>
<comment type="function">
    <text evidence="1">Catalyzes the ATP-dependent amination of UTP to CTP with either L-glutamine or ammonia as the source of nitrogen. Regulates intracellular CTP levels through interactions with the four ribonucleotide triphosphates.</text>
</comment>
<comment type="catalytic activity">
    <reaction evidence="1">
        <text>UTP + L-glutamine + ATP + H2O = CTP + L-glutamate + ADP + phosphate + 2 H(+)</text>
        <dbReference type="Rhea" id="RHEA:26426"/>
        <dbReference type="ChEBI" id="CHEBI:15377"/>
        <dbReference type="ChEBI" id="CHEBI:15378"/>
        <dbReference type="ChEBI" id="CHEBI:29985"/>
        <dbReference type="ChEBI" id="CHEBI:30616"/>
        <dbReference type="ChEBI" id="CHEBI:37563"/>
        <dbReference type="ChEBI" id="CHEBI:43474"/>
        <dbReference type="ChEBI" id="CHEBI:46398"/>
        <dbReference type="ChEBI" id="CHEBI:58359"/>
        <dbReference type="ChEBI" id="CHEBI:456216"/>
        <dbReference type="EC" id="6.3.4.2"/>
    </reaction>
</comment>
<comment type="catalytic activity">
    <reaction evidence="1">
        <text>L-glutamine + H2O = L-glutamate + NH4(+)</text>
        <dbReference type="Rhea" id="RHEA:15889"/>
        <dbReference type="ChEBI" id="CHEBI:15377"/>
        <dbReference type="ChEBI" id="CHEBI:28938"/>
        <dbReference type="ChEBI" id="CHEBI:29985"/>
        <dbReference type="ChEBI" id="CHEBI:58359"/>
    </reaction>
</comment>
<comment type="catalytic activity">
    <reaction evidence="1">
        <text>UTP + NH4(+) + ATP = CTP + ADP + phosphate + 2 H(+)</text>
        <dbReference type="Rhea" id="RHEA:16597"/>
        <dbReference type="ChEBI" id="CHEBI:15378"/>
        <dbReference type="ChEBI" id="CHEBI:28938"/>
        <dbReference type="ChEBI" id="CHEBI:30616"/>
        <dbReference type="ChEBI" id="CHEBI:37563"/>
        <dbReference type="ChEBI" id="CHEBI:43474"/>
        <dbReference type="ChEBI" id="CHEBI:46398"/>
        <dbReference type="ChEBI" id="CHEBI:456216"/>
    </reaction>
</comment>
<comment type="activity regulation">
    <text evidence="1">Allosterically activated by GTP, when glutamine is the substrate; GTP has no effect on the reaction when ammonia is the substrate. The allosteric effector GTP functions by stabilizing the protein conformation that binds the tetrahedral intermediate(s) formed during glutamine hydrolysis. Inhibited by the product CTP, via allosteric rather than competitive inhibition.</text>
</comment>
<comment type="pathway">
    <text evidence="1">Pyrimidine metabolism; CTP biosynthesis via de novo pathway; CTP from UDP: step 2/2.</text>
</comment>
<comment type="subunit">
    <text evidence="1">Homotetramer.</text>
</comment>
<comment type="miscellaneous">
    <text evidence="1">CTPSs have evolved a hybrid strategy for distinguishing between UTP and CTP. The overlapping regions of the product feedback inhibitory and substrate sites recognize a common feature in both compounds, the triphosphate moiety. To differentiate isosteric substrate and product pyrimidine rings, an additional pocket far from the expected kinase/ligase catalytic site, specifically recognizes the cytosine and ribose portions of the product inhibitor.</text>
</comment>
<comment type="similarity">
    <text evidence="1">Belongs to the CTP synthase family.</text>
</comment>
<evidence type="ECO:0000255" key="1">
    <source>
        <dbReference type="HAMAP-Rule" id="MF_01227"/>
    </source>
</evidence>
<protein>
    <recommendedName>
        <fullName evidence="1">CTP synthase</fullName>
        <ecNumber evidence="1">6.3.4.2</ecNumber>
    </recommendedName>
    <alternativeName>
        <fullName evidence="1">Cytidine 5'-triphosphate synthase</fullName>
    </alternativeName>
    <alternativeName>
        <fullName evidence="1">Cytidine triphosphate synthetase</fullName>
        <shortName evidence="1">CTP synthetase</shortName>
        <shortName evidence="1">CTPS</shortName>
    </alternativeName>
    <alternativeName>
        <fullName evidence="1">UTP--ammonia ligase</fullName>
    </alternativeName>
</protein>
<name>PYRG_PSEAB</name>
<organism>
    <name type="scientific">Pseudomonas aeruginosa (strain UCBPP-PA14)</name>
    <dbReference type="NCBI Taxonomy" id="208963"/>
    <lineage>
        <taxon>Bacteria</taxon>
        <taxon>Pseudomonadati</taxon>
        <taxon>Pseudomonadota</taxon>
        <taxon>Gammaproteobacteria</taxon>
        <taxon>Pseudomonadales</taxon>
        <taxon>Pseudomonadaceae</taxon>
        <taxon>Pseudomonas</taxon>
    </lineage>
</organism>
<reference key="1">
    <citation type="journal article" date="2006" name="Genome Biol.">
        <title>Genomic analysis reveals that Pseudomonas aeruginosa virulence is combinatorial.</title>
        <authorList>
            <person name="Lee D.G."/>
            <person name="Urbach J.M."/>
            <person name="Wu G."/>
            <person name="Liberati N.T."/>
            <person name="Feinbaum R.L."/>
            <person name="Miyata S."/>
            <person name="Diggins L.T."/>
            <person name="He J."/>
            <person name="Saucier M."/>
            <person name="Deziel E."/>
            <person name="Friedman L."/>
            <person name="Li L."/>
            <person name="Grills G."/>
            <person name="Montgomery K."/>
            <person name="Kucherlapati R."/>
            <person name="Rahme L.G."/>
            <person name="Ausubel F.M."/>
        </authorList>
    </citation>
    <scope>NUCLEOTIDE SEQUENCE [LARGE SCALE GENOMIC DNA]</scope>
    <source>
        <strain>UCBPP-PA14</strain>
    </source>
</reference>
<accession>Q02RA9</accession>
<sequence>MTRYIFVTGGVVSSLGKGIASASLAAILEARGLKITMLKLDPYINVDPGTMSPFQHGEVFVTQDGAETDLDLGHYERFVRTTMTQNNNFTTGRVYMDVLRKERRGDYLGATVQVIPHITDEIKRRIIKGAGDADVALVEIGGTVGDIESQPFLEAIRQLRVEIGAKRAMLMHLTLVPYIATAGETKTKPTQHSVKELRSIGLQPDVLVCRSDHPIDVSSRRKIALFTNVEERAVIALEDVDTIYRIPSVLHAQGLDDIVVERFGLECGQADLSEWDRVVDAKLNPEREVTIAMVGKYMELLDAYKSLIEAMTHAGIQSRTKVNLRYIDSEDIEQQGTSLLEGVDAILVPGGFGLRGVEGKISTVQYARENKIPYLGICLGMQVAVIEYARNVLGWSDANSTEFDKSSGHPVVGLITEWQDATGATEIRTEASDLGGTMRLGAQECQLQTGTLVHDCYAKDVIVERHRHRYEVNNNLLPQLEQAGLKISGRSGDGALVEVVEAPEHPWFVACQFHPEFTSTPRDGHPLFSGFVNAALKYSGKA</sequence>
<proteinExistence type="inferred from homology"/>
<keyword id="KW-0067">ATP-binding</keyword>
<keyword id="KW-0315">Glutamine amidotransferase</keyword>
<keyword id="KW-0436">Ligase</keyword>
<keyword id="KW-0460">Magnesium</keyword>
<keyword id="KW-0479">Metal-binding</keyword>
<keyword id="KW-0547">Nucleotide-binding</keyword>
<keyword id="KW-0665">Pyrimidine biosynthesis</keyword>
<feature type="chain" id="PRO_1000139532" description="CTP synthase">
    <location>
        <begin position="1"/>
        <end position="542"/>
    </location>
</feature>
<feature type="domain" description="Glutamine amidotransferase type-1" evidence="1">
    <location>
        <begin position="290"/>
        <end position="541"/>
    </location>
</feature>
<feature type="region of interest" description="Amidoligase domain" evidence="1">
    <location>
        <begin position="1"/>
        <end position="265"/>
    </location>
</feature>
<feature type="active site" description="Nucleophile; for glutamine hydrolysis" evidence="1">
    <location>
        <position position="378"/>
    </location>
</feature>
<feature type="active site" evidence="1">
    <location>
        <position position="514"/>
    </location>
</feature>
<feature type="active site" evidence="1">
    <location>
        <position position="516"/>
    </location>
</feature>
<feature type="binding site" evidence="1">
    <location>
        <position position="13"/>
    </location>
    <ligand>
        <name>CTP</name>
        <dbReference type="ChEBI" id="CHEBI:37563"/>
        <note>allosteric inhibitor</note>
    </ligand>
</feature>
<feature type="binding site" evidence="1">
    <location>
        <position position="13"/>
    </location>
    <ligand>
        <name>UTP</name>
        <dbReference type="ChEBI" id="CHEBI:46398"/>
    </ligand>
</feature>
<feature type="binding site" evidence="1">
    <location>
        <begin position="14"/>
        <end position="19"/>
    </location>
    <ligand>
        <name>ATP</name>
        <dbReference type="ChEBI" id="CHEBI:30616"/>
    </ligand>
</feature>
<feature type="binding site" evidence="1">
    <location>
        <position position="71"/>
    </location>
    <ligand>
        <name>ATP</name>
        <dbReference type="ChEBI" id="CHEBI:30616"/>
    </ligand>
</feature>
<feature type="binding site" evidence="1">
    <location>
        <position position="71"/>
    </location>
    <ligand>
        <name>Mg(2+)</name>
        <dbReference type="ChEBI" id="CHEBI:18420"/>
    </ligand>
</feature>
<feature type="binding site" evidence="1">
    <location>
        <position position="139"/>
    </location>
    <ligand>
        <name>Mg(2+)</name>
        <dbReference type="ChEBI" id="CHEBI:18420"/>
    </ligand>
</feature>
<feature type="binding site" evidence="1">
    <location>
        <begin position="146"/>
        <end position="148"/>
    </location>
    <ligand>
        <name>CTP</name>
        <dbReference type="ChEBI" id="CHEBI:37563"/>
        <note>allosteric inhibitor</note>
    </ligand>
</feature>
<feature type="binding site" evidence="1">
    <location>
        <begin position="186"/>
        <end position="191"/>
    </location>
    <ligand>
        <name>CTP</name>
        <dbReference type="ChEBI" id="CHEBI:37563"/>
        <note>allosteric inhibitor</note>
    </ligand>
</feature>
<feature type="binding site" evidence="1">
    <location>
        <begin position="186"/>
        <end position="191"/>
    </location>
    <ligand>
        <name>UTP</name>
        <dbReference type="ChEBI" id="CHEBI:46398"/>
    </ligand>
</feature>
<feature type="binding site" evidence="1">
    <location>
        <position position="222"/>
    </location>
    <ligand>
        <name>CTP</name>
        <dbReference type="ChEBI" id="CHEBI:37563"/>
        <note>allosteric inhibitor</note>
    </ligand>
</feature>
<feature type="binding site" evidence="1">
    <location>
        <position position="222"/>
    </location>
    <ligand>
        <name>UTP</name>
        <dbReference type="ChEBI" id="CHEBI:46398"/>
    </ligand>
</feature>
<feature type="binding site" evidence="1">
    <location>
        <position position="351"/>
    </location>
    <ligand>
        <name>L-glutamine</name>
        <dbReference type="ChEBI" id="CHEBI:58359"/>
    </ligand>
</feature>
<feature type="binding site" evidence="1">
    <location>
        <begin position="379"/>
        <end position="382"/>
    </location>
    <ligand>
        <name>L-glutamine</name>
        <dbReference type="ChEBI" id="CHEBI:58359"/>
    </ligand>
</feature>
<feature type="binding site" evidence="1">
    <location>
        <position position="402"/>
    </location>
    <ligand>
        <name>L-glutamine</name>
        <dbReference type="ChEBI" id="CHEBI:58359"/>
    </ligand>
</feature>
<feature type="binding site" evidence="1">
    <location>
        <position position="469"/>
    </location>
    <ligand>
        <name>L-glutamine</name>
        <dbReference type="ChEBI" id="CHEBI:58359"/>
    </ligand>
</feature>